<accession>P20191</accession>
<accession>Q5V298</accession>
<dbReference type="EMBL" id="AY596297">
    <property type="protein sequence ID" value="AAV46354.1"/>
    <property type="molecule type" value="Genomic_DNA"/>
</dbReference>
<dbReference type="EMBL" id="J04062">
    <property type="status" value="NOT_ANNOTATED_CDS"/>
    <property type="molecule type" value="Genomic_DNA"/>
</dbReference>
<dbReference type="PIR" id="B31906">
    <property type="entry name" value="B31906"/>
</dbReference>
<dbReference type="RefSeq" id="WP_011223616.1">
    <property type="nucleotide sequence ID" value="NC_006396.1"/>
</dbReference>
<dbReference type="SMR" id="P20191"/>
<dbReference type="STRING" id="272569.rrnAC1427"/>
<dbReference type="PaxDb" id="272569-rrnAC1427"/>
<dbReference type="EnsemblBacteria" id="AAV46354">
    <property type="protein sequence ID" value="AAV46354"/>
    <property type="gene ID" value="rrnAC1427"/>
</dbReference>
<dbReference type="GeneID" id="40152396"/>
<dbReference type="KEGG" id="hma:rrnAC1427"/>
<dbReference type="PATRIC" id="fig|272569.17.peg.2123"/>
<dbReference type="eggNOG" id="arCOG00428">
    <property type="taxonomic scope" value="Archaea"/>
</dbReference>
<dbReference type="HOGENOM" id="CLU_036273_0_0_2"/>
<dbReference type="Proteomes" id="UP000001169">
    <property type="component" value="Chromosome I"/>
</dbReference>
<keyword id="KW-1185">Reference proteome</keyword>
<sequence length="369" mass="37738">MSATGREPTPATSPGDLAGSLREAAFVRLVSDATGEALAATGLLARALDDTPFQASVVRPFEDPDRTTETDITIAIGRTQLTADVTLTDRAAATAFETARELGTADPALALAGTIAAGDVDGTVAEAAEQAGLDQRPGVAVPGTDLADGLAHSTLFVAPFSGDADEARATLAELDISPDGPPSADDHRRLASLVALTVTTDAPPRAADAVQRALRPTAGGPFETVGGYADVLDAVAREQPGTAVALALGHEAVSEDALAAWRSHATRAHDAVSEATTGRYDGLFVARGDAMPTGTVARLFADYRAPEPVTLVVTDDRAAARATDGRDVAETMHAAAETVGGDAVGTGDRARARFDVSTADFIEAFREAV</sequence>
<gene>
    <name type="ordered locus">rrnAC1427</name>
</gene>
<name>Y1427_HALMA</name>
<protein>
    <recommendedName>
        <fullName>Uncharacterized protein rrnAC1427</fullName>
    </recommendedName>
</protein>
<evidence type="ECO:0000305" key="1"/>
<organism>
    <name type="scientific">Haloarcula marismortui (strain ATCC 43049 / DSM 3752 / JCM 8966 / VKM B-1809)</name>
    <name type="common">Halobacterium marismortui</name>
    <dbReference type="NCBI Taxonomy" id="272569"/>
    <lineage>
        <taxon>Archaea</taxon>
        <taxon>Methanobacteriati</taxon>
        <taxon>Methanobacteriota</taxon>
        <taxon>Stenosarchaea group</taxon>
        <taxon>Halobacteria</taxon>
        <taxon>Halobacteriales</taxon>
        <taxon>Haloarculaceae</taxon>
        <taxon>Haloarcula</taxon>
    </lineage>
</organism>
<reference key="1">
    <citation type="journal article" date="2004" name="Genome Res.">
        <title>Genome sequence of Haloarcula marismortui: a halophilic archaeon from the Dead Sea.</title>
        <authorList>
            <person name="Baliga N.S."/>
            <person name="Bonneau R."/>
            <person name="Facciotti M.T."/>
            <person name="Pan M."/>
            <person name="Glusman G."/>
            <person name="Deutsch E.W."/>
            <person name="Shannon P."/>
            <person name="Chiu Y."/>
            <person name="Weng R.S."/>
            <person name="Gan R.R."/>
            <person name="Hung P."/>
            <person name="Date S.V."/>
            <person name="Marcotte E."/>
            <person name="Hood L."/>
            <person name="Ng W.V."/>
        </authorList>
    </citation>
    <scope>NUCLEOTIDE SEQUENCE [LARGE SCALE GENOMIC DNA]</scope>
    <source>
        <strain>ATCC 43049 / DSM 3752 / JCM 8966 / VKM B-1809</strain>
    </source>
</reference>
<reference key="2">
    <citation type="journal article" date="1988" name="J. Biol. Chem.">
        <title>Molecular cloning and nucleotide sequence of the gene for the ribosomal protein S11 from the archaebacterium Halobacterium marismortui.</title>
        <authorList>
            <person name="Arndt E."/>
            <person name="Kimura M."/>
        </authorList>
    </citation>
    <scope>NUCLEOTIDE SEQUENCE [GENOMIC DNA] OF 1-205</scope>
</reference>
<feature type="chain" id="PRO_0000066068" description="Uncharacterized protein rrnAC1427">
    <location>
        <begin position="1"/>
        <end position="369"/>
    </location>
</feature>
<feature type="sequence conflict" description="In Ref. 2." evidence="1" ref="2">
    <original>DGPPSADDHRRLASLVALTVTTDAP</original>
    <variation>TDLRRPTTTDAVAVAGRADSNHGRA</variation>
    <location>
        <begin position="179"/>
        <end position="203"/>
    </location>
</feature>
<proteinExistence type="predicted"/>